<sequence>MTDQYVLALDQGTTSSRAILFNRSGDIVSLAQKEFRQIYPQPGWVEHDPQEIWGGQVGVAAEAVAKAGIDGRSIAAIGITNQRETTIVWDRETGQPVYNAIVWQDRRTAEFCDELKARGLGELIRSKTGLLVDAYFSGSKIKWILDNVPGARDRAREGKLAFGTVDSWLIWNFTHGKVHVTDVSNASRTMLYNIHTLQWDAELLDIMGIPASMLPEVKSSSEVYGHTHAAHLGVEIPIAGVAGDQQAALFGQQCTTPGMVKNTYGTGCFMMLNTGDKPIESSNNLLTTIAWKVDGKVQYALEGSIFIGGAVVKWLRDGLGIIRHSADVGPLAQEVKNSDGVYLVPAFAGLGAPHWNASARGTIVGATLGTKAAHIARAALDSIAYQTRDVLKAMEADAGMSIAELRVDGGATVNELLMQFQSDILAVDVVRPKITETTALGAAYLAGLAVGYWKSVDDIQGQWQLDRRFQPAMAADEVLANVKGWQRAVNAAKVWADDQA</sequence>
<comment type="function">
    <text evidence="1">Key enzyme in the regulation of glycerol uptake and metabolism. Catalyzes the phosphorylation of glycerol to yield sn-glycerol 3-phosphate.</text>
</comment>
<comment type="catalytic activity">
    <reaction evidence="1">
        <text>glycerol + ATP = sn-glycerol 3-phosphate + ADP + H(+)</text>
        <dbReference type="Rhea" id="RHEA:21644"/>
        <dbReference type="ChEBI" id="CHEBI:15378"/>
        <dbReference type="ChEBI" id="CHEBI:17754"/>
        <dbReference type="ChEBI" id="CHEBI:30616"/>
        <dbReference type="ChEBI" id="CHEBI:57597"/>
        <dbReference type="ChEBI" id="CHEBI:456216"/>
        <dbReference type="EC" id="2.7.1.30"/>
    </reaction>
</comment>
<comment type="activity regulation">
    <text evidence="1">Inhibited by fructose 1,6-bisphosphate (FBP).</text>
</comment>
<comment type="pathway">
    <text evidence="1">Polyol metabolism; glycerol degradation via glycerol kinase pathway; sn-glycerol 3-phosphate from glycerol: step 1/1.</text>
</comment>
<comment type="similarity">
    <text evidence="1">Belongs to the FGGY kinase family.</text>
</comment>
<organism>
    <name type="scientific">Chromobacterium violaceum (strain ATCC 12472 / DSM 30191 / JCM 1249 / CCUG 213 / NBRC 12614 / NCIMB 9131 / NCTC 9757 / MK)</name>
    <dbReference type="NCBI Taxonomy" id="243365"/>
    <lineage>
        <taxon>Bacteria</taxon>
        <taxon>Pseudomonadati</taxon>
        <taxon>Pseudomonadota</taxon>
        <taxon>Betaproteobacteria</taxon>
        <taxon>Neisseriales</taxon>
        <taxon>Chromobacteriaceae</taxon>
        <taxon>Chromobacterium</taxon>
    </lineage>
</organism>
<feature type="chain" id="PRO_0000059442" description="Glycerol kinase">
    <location>
        <begin position="1"/>
        <end position="500"/>
    </location>
</feature>
<feature type="binding site" evidence="1">
    <location>
        <position position="13"/>
    </location>
    <ligand>
        <name>ADP</name>
        <dbReference type="ChEBI" id="CHEBI:456216"/>
    </ligand>
</feature>
<feature type="binding site" evidence="1">
    <location>
        <position position="13"/>
    </location>
    <ligand>
        <name>ATP</name>
        <dbReference type="ChEBI" id="CHEBI:30616"/>
    </ligand>
</feature>
<feature type="binding site" evidence="1">
    <location>
        <position position="13"/>
    </location>
    <ligand>
        <name>sn-glycerol 3-phosphate</name>
        <dbReference type="ChEBI" id="CHEBI:57597"/>
    </ligand>
</feature>
<feature type="binding site" evidence="1">
    <location>
        <position position="14"/>
    </location>
    <ligand>
        <name>ATP</name>
        <dbReference type="ChEBI" id="CHEBI:30616"/>
    </ligand>
</feature>
<feature type="binding site" evidence="1">
    <location>
        <position position="15"/>
    </location>
    <ligand>
        <name>ATP</name>
        <dbReference type="ChEBI" id="CHEBI:30616"/>
    </ligand>
</feature>
<feature type="binding site" evidence="1">
    <location>
        <position position="17"/>
    </location>
    <ligand>
        <name>ADP</name>
        <dbReference type="ChEBI" id="CHEBI:456216"/>
    </ligand>
</feature>
<feature type="binding site" evidence="1">
    <location>
        <position position="83"/>
    </location>
    <ligand>
        <name>glycerol</name>
        <dbReference type="ChEBI" id="CHEBI:17754"/>
    </ligand>
</feature>
<feature type="binding site" evidence="1">
    <location>
        <position position="83"/>
    </location>
    <ligand>
        <name>sn-glycerol 3-phosphate</name>
        <dbReference type="ChEBI" id="CHEBI:57597"/>
    </ligand>
</feature>
<feature type="binding site" evidence="1">
    <location>
        <position position="84"/>
    </location>
    <ligand>
        <name>glycerol</name>
        <dbReference type="ChEBI" id="CHEBI:17754"/>
    </ligand>
</feature>
<feature type="binding site" evidence="1">
    <location>
        <position position="84"/>
    </location>
    <ligand>
        <name>sn-glycerol 3-phosphate</name>
        <dbReference type="ChEBI" id="CHEBI:57597"/>
    </ligand>
</feature>
<feature type="binding site" evidence="1">
    <location>
        <position position="135"/>
    </location>
    <ligand>
        <name>glycerol</name>
        <dbReference type="ChEBI" id="CHEBI:17754"/>
    </ligand>
</feature>
<feature type="binding site" evidence="1">
    <location>
        <position position="135"/>
    </location>
    <ligand>
        <name>sn-glycerol 3-phosphate</name>
        <dbReference type="ChEBI" id="CHEBI:57597"/>
    </ligand>
</feature>
<feature type="binding site" evidence="1">
    <location>
        <position position="244"/>
    </location>
    <ligand>
        <name>glycerol</name>
        <dbReference type="ChEBI" id="CHEBI:17754"/>
    </ligand>
</feature>
<feature type="binding site" evidence="1">
    <location>
        <position position="244"/>
    </location>
    <ligand>
        <name>sn-glycerol 3-phosphate</name>
        <dbReference type="ChEBI" id="CHEBI:57597"/>
    </ligand>
</feature>
<feature type="binding site" evidence="1">
    <location>
        <position position="245"/>
    </location>
    <ligand>
        <name>glycerol</name>
        <dbReference type="ChEBI" id="CHEBI:17754"/>
    </ligand>
</feature>
<feature type="binding site" evidence="1">
    <location>
        <position position="266"/>
    </location>
    <ligand>
        <name>ADP</name>
        <dbReference type="ChEBI" id="CHEBI:456216"/>
    </ligand>
</feature>
<feature type="binding site" evidence="1">
    <location>
        <position position="266"/>
    </location>
    <ligand>
        <name>ATP</name>
        <dbReference type="ChEBI" id="CHEBI:30616"/>
    </ligand>
</feature>
<feature type="binding site" evidence="1">
    <location>
        <position position="309"/>
    </location>
    <ligand>
        <name>ADP</name>
        <dbReference type="ChEBI" id="CHEBI:456216"/>
    </ligand>
</feature>
<feature type="binding site" evidence="1">
    <location>
        <position position="309"/>
    </location>
    <ligand>
        <name>ATP</name>
        <dbReference type="ChEBI" id="CHEBI:30616"/>
    </ligand>
</feature>
<feature type="binding site" evidence="1">
    <location>
        <position position="410"/>
    </location>
    <ligand>
        <name>ADP</name>
        <dbReference type="ChEBI" id="CHEBI:456216"/>
    </ligand>
</feature>
<feature type="binding site" evidence="1">
    <location>
        <position position="410"/>
    </location>
    <ligand>
        <name>ATP</name>
        <dbReference type="ChEBI" id="CHEBI:30616"/>
    </ligand>
</feature>
<feature type="binding site" evidence="1">
    <location>
        <position position="414"/>
    </location>
    <ligand>
        <name>ADP</name>
        <dbReference type="ChEBI" id="CHEBI:456216"/>
    </ligand>
</feature>
<name>GLPK_CHRVO</name>
<protein>
    <recommendedName>
        <fullName evidence="1">Glycerol kinase</fullName>
        <ecNumber evidence="1">2.7.1.30</ecNumber>
    </recommendedName>
    <alternativeName>
        <fullName evidence="1">ATP:glycerol 3-phosphotransferase</fullName>
    </alternativeName>
    <alternativeName>
        <fullName evidence="1">Glycerokinase</fullName>
        <shortName evidence="1">GK</shortName>
    </alternativeName>
</protein>
<evidence type="ECO:0000255" key="1">
    <source>
        <dbReference type="HAMAP-Rule" id="MF_00186"/>
    </source>
</evidence>
<dbReference type="EC" id="2.7.1.30" evidence="1"/>
<dbReference type="EMBL" id="AE016825">
    <property type="protein sequence ID" value="AAQ57930.1"/>
    <property type="molecule type" value="Genomic_DNA"/>
</dbReference>
<dbReference type="RefSeq" id="WP_011133806.1">
    <property type="nucleotide sequence ID" value="NC_005085.1"/>
</dbReference>
<dbReference type="SMR" id="Q7P1G2"/>
<dbReference type="STRING" id="243365.CV_0251"/>
<dbReference type="GeneID" id="66365857"/>
<dbReference type="KEGG" id="cvi:CV_0251"/>
<dbReference type="eggNOG" id="COG0554">
    <property type="taxonomic scope" value="Bacteria"/>
</dbReference>
<dbReference type="HOGENOM" id="CLU_009281_2_3_4"/>
<dbReference type="OrthoDB" id="9805576at2"/>
<dbReference type="UniPathway" id="UPA00618">
    <property type="reaction ID" value="UER00672"/>
</dbReference>
<dbReference type="Proteomes" id="UP000001424">
    <property type="component" value="Chromosome"/>
</dbReference>
<dbReference type="GO" id="GO:0005829">
    <property type="term" value="C:cytosol"/>
    <property type="evidence" value="ECO:0007669"/>
    <property type="project" value="TreeGrafter"/>
</dbReference>
<dbReference type="GO" id="GO:0005524">
    <property type="term" value="F:ATP binding"/>
    <property type="evidence" value="ECO:0007669"/>
    <property type="project" value="UniProtKB-UniRule"/>
</dbReference>
<dbReference type="GO" id="GO:0004370">
    <property type="term" value="F:glycerol kinase activity"/>
    <property type="evidence" value="ECO:0000250"/>
    <property type="project" value="UniProtKB"/>
</dbReference>
<dbReference type="GO" id="GO:0019563">
    <property type="term" value="P:glycerol catabolic process"/>
    <property type="evidence" value="ECO:0007669"/>
    <property type="project" value="UniProtKB-UniRule"/>
</dbReference>
<dbReference type="GO" id="GO:0006071">
    <property type="term" value="P:glycerol metabolic process"/>
    <property type="evidence" value="ECO:0000250"/>
    <property type="project" value="UniProtKB"/>
</dbReference>
<dbReference type="GO" id="GO:0006072">
    <property type="term" value="P:glycerol-3-phosphate metabolic process"/>
    <property type="evidence" value="ECO:0007669"/>
    <property type="project" value="InterPro"/>
</dbReference>
<dbReference type="CDD" id="cd07786">
    <property type="entry name" value="FGGY_EcGK_like"/>
    <property type="match status" value="1"/>
</dbReference>
<dbReference type="FunFam" id="3.30.420.40:FF:000007">
    <property type="entry name" value="Glycerol kinase"/>
    <property type="match status" value="1"/>
</dbReference>
<dbReference type="FunFam" id="3.30.420.40:FF:000008">
    <property type="entry name" value="Glycerol kinase"/>
    <property type="match status" value="1"/>
</dbReference>
<dbReference type="Gene3D" id="3.30.420.40">
    <property type="match status" value="2"/>
</dbReference>
<dbReference type="HAMAP" id="MF_00186">
    <property type="entry name" value="Glycerol_kin"/>
    <property type="match status" value="1"/>
</dbReference>
<dbReference type="InterPro" id="IPR043129">
    <property type="entry name" value="ATPase_NBD"/>
</dbReference>
<dbReference type="InterPro" id="IPR000577">
    <property type="entry name" value="Carb_kinase_FGGY"/>
</dbReference>
<dbReference type="InterPro" id="IPR018483">
    <property type="entry name" value="Carb_kinase_FGGY_CS"/>
</dbReference>
<dbReference type="InterPro" id="IPR018485">
    <property type="entry name" value="FGGY_C"/>
</dbReference>
<dbReference type="InterPro" id="IPR018484">
    <property type="entry name" value="FGGY_N"/>
</dbReference>
<dbReference type="InterPro" id="IPR005999">
    <property type="entry name" value="Glycerol_kin"/>
</dbReference>
<dbReference type="NCBIfam" id="TIGR01311">
    <property type="entry name" value="glycerol_kin"/>
    <property type="match status" value="1"/>
</dbReference>
<dbReference type="NCBIfam" id="NF000756">
    <property type="entry name" value="PRK00047.1"/>
    <property type="match status" value="1"/>
</dbReference>
<dbReference type="PANTHER" id="PTHR10196:SF69">
    <property type="entry name" value="GLYCEROL KINASE"/>
    <property type="match status" value="1"/>
</dbReference>
<dbReference type="PANTHER" id="PTHR10196">
    <property type="entry name" value="SUGAR KINASE"/>
    <property type="match status" value="1"/>
</dbReference>
<dbReference type="Pfam" id="PF02782">
    <property type="entry name" value="FGGY_C"/>
    <property type="match status" value="1"/>
</dbReference>
<dbReference type="Pfam" id="PF00370">
    <property type="entry name" value="FGGY_N"/>
    <property type="match status" value="1"/>
</dbReference>
<dbReference type="PIRSF" id="PIRSF000538">
    <property type="entry name" value="GlpK"/>
    <property type="match status" value="1"/>
</dbReference>
<dbReference type="SUPFAM" id="SSF53067">
    <property type="entry name" value="Actin-like ATPase domain"/>
    <property type="match status" value="2"/>
</dbReference>
<dbReference type="PROSITE" id="PS00933">
    <property type="entry name" value="FGGY_KINASES_1"/>
    <property type="match status" value="1"/>
</dbReference>
<keyword id="KW-0067">ATP-binding</keyword>
<keyword id="KW-0319">Glycerol metabolism</keyword>
<keyword id="KW-0418">Kinase</keyword>
<keyword id="KW-0547">Nucleotide-binding</keyword>
<keyword id="KW-1185">Reference proteome</keyword>
<keyword id="KW-0808">Transferase</keyword>
<proteinExistence type="inferred from homology"/>
<gene>
    <name evidence="1" type="primary">glpK</name>
    <name type="ordered locus">CV_0251</name>
</gene>
<accession>Q7P1G2</accession>
<reference key="1">
    <citation type="journal article" date="2003" name="Proc. Natl. Acad. Sci. U.S.A.">
        <title>The complete genome sequence of Chromobacterium violaceum reveals remarkable and exploitable bacterial adaptability.</title>
        <authorList>
            <person name="Vasconcelos A.T.R."/>
            <person name="de Almeida D.F."/>
            <person name="Hungria M."/>
            <person name="Guimaraes C.T."/>
            <person name="Antonio R.V."/>
            <person name="Almeida F.C."/>
            <person name="de Almeida L.G.P."/>
            <person name="de Almeida R."/>
            <person name="Alves-Gomes J.A."/>
            <person name="Andrade E.M."/>
            <person name="Araripe J."/>
            <person name="de Araujo M.F.F."/>
            <person name="Astolfi-Filho S."/>
            <person name="Azevedo V."/>
            <person name="Baptista A.J."/>
            <person name="Bataus L.A.M."/>
            <person name="Batista J.S."/>
            <person name="Belo A."/>
            <person name="van den Berg C."/>
            <person name="Bogo M."/>
            <person name="Bonatto S."/>
            <person name="Bordignon J."/>
            <person name="Brigido M.M."/>
            <person name="Brito C.A."/>
            <person name="Brocchi M."/>
            <person name="Burity H.A."/>
            <person name="Camargo A.A."/>
            <person name="Cardoso D.D.P."/>
            <person name="Carneiro N.P."/>
            <person name="Carraro D.M."/>
            <person name="Carvalho C.M.B."/>
            <person name="Cascardo J.C.M."/>
            <person name="Cavada B.S."/>
            <person name="Chueire L.M.O."/>
            <person name="Creczynski-Pasa T.B."/>
            <person name="Cunha-Junior N.C."/>
            <person name="Fagundes N."/>
            <person name="Falcao C.L."/>
            <person name="Fantinatti F."/>
            <person name="Farias I.P."/>
            <person name="Felipe M.S.S."/>
            <person name="Ferrari L.P."/>
            <person name="Ferro J.A."/>
            <person name="Ferro M.I.T."/>
            <person name="Franco G.R."/>
            <person name="Freitas N.S.A."/>
            <person name="Furlan L.R."/>
            <person name="Gazzinelli R.T."/>
            <person name="Gomes E.A."/>
            <person name="Goncalves P.R."/>
            <person name="Grangeiro T.B."/>
            <person name="Grattapaglia D."/>
            <person name="Grisard E.C."/>
            <person name="Hanna E.S."/>
            <person name="Jardim S.N."/>
            <person name="Laurino J."/>
            <person name="Leoi L.C.T."/>
            <person name="Lima L.F.A."/>
            <person name="Loureiro M.F."/>
            <person name="Lyra M.C.C.P."/>
            <person name="Madeira H.M.F."/>
            <person name="Manfio G.P."/>
            <person name="Maranhao A.Q."/>
            <person name="Martins W.S."/>
            <person name="di Mauro S.M.Z."/>
            <person name="de Medeiros S.R.B."/>
            <person name="Meissner R.V."/>
            <person name="Moreira M.A.M."/>
            <person name="Nascimento F.F."/>
            <person name="Nicolas M.F."/>
            <person name="Oliveira J.G."/>
            <person name="Oliveira S.C."/>
            <person name="Paixao R.F.C."/>
            <person name="Parente J.A."/>
            <person name="Pedrosa F.O."/>
            <person name="Pena S.D.J."/>
            <person name="Pereira J.O."/>
            <person name="Pereira M."/>
            <person name="Pinto L.S.R.C."/>
            <person name="Pinto L.S."/>
            <person name="Porto J.I.R."/>
            <person name="Potrich D.P."/>
            <person name="Ramalho-Neto C.E."/>
            <person name="Reis A.M.M."/>
            <person name="Rigo L.U."/>
            <person name="Rondinelli E."/>
            <person name="Santos E.B.P."/>
            <person name="Santos F.R."/>
            <person name="Schneider M.P.C."/>
            <person name="Seuanez H.N."/>
            <person name="Silva A.M.R."/>
            <person name="da Silva A.L.C."/>
            <person name="Silva D.W."/>
            <person name="Silva R."/>
            <person name="Simoes I.C."/>
            <person name="Simon D."/>
            <person name="Soares C.M.A."/>
            <person name="Soares R.B.A."/>
            <person name="Souza E.M."/>
            <person name="Souza K.R.L."/>
            <person name="Souza R.C."/>
            <person name="Steffens M.B.R."/>
            <person name="Steindel M."/>
            <person name="Teixeira S.R."/>
            <person name="Urmenyi T."/>
            <person name="Vettore A."/>
            <person name="Wassem R."/>
            <person name="Zaha A."/>
            <person name="Simpson A.J.G."/>
        </authorList>
    </citation>
    <scope>NUCLEOTIDE SEQUENCE [LARGE SCALE GENOMIC DNA]</scope>
    <source>
        <strain>ATCC 12472 / DSM 30191 / JCM 1249 / CCUG 213 / NBRC 12614 / NCIMB 9131 / NCTC 9757 / MK</strain>
    </source>
</reference>